<evidence type="ECO:0000269" key="1">
    <source>
    </source>
</evidence>
<evidence type="ECO:0000305" key="2"/>
<evidence type="ECO:0007829" key="3">
    <source>
        <dbReference type="PDB" id="1DWM"/>
    </source>
</evidence>
<comment type="function">
    <text evidence="1">In vitro, strong inhibitor of bovine beta-trypsin, weak inhibitor of alpha-chymotrypsin, subtilisin BPN', subtilisin Carlsberg and cathepsin G.</text>
</comment>
<comment type="mass spectrometry"/>
<comment type="similarity">
    <text evidence="2">Belongs to the protease inhibitor I13 (potato type I serine protease inhibitor) family.</text>
</comment>
<keyword id="KW-0002">3D-structure</keyword>
<keyword id="KW-0007">Acetylation</keyword>
<keyword id="KW-0903">Direct protein sequencing</keyword>
<keyword id="KW-1015">Disulfide bond</keyword>
<keyword id="KW-0646">Protease inhibitor</keyword>
<keyword id="KW-0722">Serine protease inhibitor</keyword>
<sequence>SRRCPGKNAWPELVGKSGNMAAATVERENRNVHAIVLKEGSAMTKDFRCDRVWVIVNDHGVVTSVPHIT</sequence>
<reference key="1">
    <citation type="journal article" date="2001" name="ChemBioChem">
        <title>Isolation and amino acid sequence of a serine proteinase inhibitor from common flax (Linum usitatissimum) seeds.</title>
        <authorList>
            <person name="Lorenc-Kubis I."/>
            <person name="Kowalska J."/>
            <person name="Pochron B."/>
            <person name="Zuzlo A."/>
            <person name="Wilusz T."/>
        </authorList>
    </citation>
    <scope>PROTEIN SEQUENCE</scope>
    <scope>FUNCTION</scope>
    <scope>MASS SPECTROMETRY</scope>
    <scope>ACETYLATION AT SER-1</scope>
    <scope>ACTIVE BOND</scope>
    <scope>DISULFIDE BOND</scope>
</reference>
<proteinExistence type="evidence at protein level"/>
<organism>
    <name type="scientific">Linum usitatissimum</name>
    <name type="common">Flax</name>
    <name type="synonym">Linum humile</name>
    <dbReference type="NCBI Taxonomy" id="4006"/>
    <lineage>
        <taxon>Eukaryota</taxon>
        <taxon>Viridiplantae</taxon>
        <taxon>Streptophyta</taxon>
        <taxon>Embryophyta</taxon>
        <taxon>Tracheophyta</taxon>
        <taxon>Spermatophyta</taxon>
        <taxon>Magnoliopsida</taxon>
        <taxon>eudicotyledons</taxon>
        <taxon>Gunneridae</taxon>
        <taxon>Pentapetalae</taxon>
        <taxon>rosids</taxon>
        <taxon>fabids</taxon>
        <taxon>Malpighiales</taxon>
        <taxon>Linaceae</taxon>
        <taxon>Linum</taxon>
    </lineage>
</organism>
<accession>P82381</accession>
<feature type="chain" id="PRO_0000217652" description="Proteinase inhibitor">
    <location>
        <begin position="1"/>
        <end position="69"/>
    </location>
</feature>
<feature type="site" description="Reactive bond">
    <location>
        <begin position="45"/>
        <end position="46"/>
    </location>
</feature>
<feature type="modified residue" description="N-acetylserine" evidence="1">
    <location>
        <position position="1"/>
    </location>
</feature>
<feature type="disulfide bond" evidence="1">
    <location>
        <begin position="4"/>
        <end position="49"/>
    </location>
</feature>
<feature type="helix" evidence="3">
    <location>
        <begin position="11"/>
        <end position="13"/>
    </location>
</feature>
<feature type="helix" evidence="3">
    <location>
        <begin position="18"/>
        <end position="28"/>
    </location>
</feature>
<feature type="strand" evidence="3">
    <location>
        <begin position="33"/>
        <end position="38"/>
    </location>
</feature>
<feature type="strand" evidence="3">
    <location>
        <begin position="51"/>
        <end position="56"/>
    </location>
</feature>
<feature type="strand" evidence="3">
    <location>
        <begin position="60"/>
        <end position="62"/>
    </location>
</feature>
<name>ICI_LINUS</name>
<protein>
    <recommendedName>
        <fullName>Proteinase inhibitor</fullName>
    </recommendedName>
    <alternativeName>
        <fullName>LUTI</fullName>
    </alternativeName>
</protein>
<dbReference type="PDB" id="1DWM">
    <property type="method" value="NMR"/>
    <property type="chains" value="A=1-69"/>
</dbReference>
<dbReference type="PDBsum" id="1DWM"/>
<dbReference type="SMR" id="P82381"/>
<dbReference type="iPTMnet" id="P82381"/>
<dbReference type="EvolutionaryTrace" id="P82381"/>
<dbReference type="GO" id="GO:0004867">
    <property type="term" value="F:serine-type endopeptidase inhibitor activity"/>
    <property type="evidence" value="ECO:0007669"/>
    <property type="project" value="UniProtKB-KW"/>
</dbReference>
<dbReference type="GO" id="GO:0009611">
    <property type="term" value="P:response to wounding"/>
    <property type="evidence" value="ECO:0007669"/>
    <property type="project" value="InterPro"/>
</dbReference>
<dbReference type="Gene3D" id="3.30.10.10">
    <property type="entry name" value="Trypsin Inhibitor V, subunit A"/>
    <property type="match status" value="1"/>
</dbReference>
<dbReference type="InterPro" id="IPR000864">
    <property type="entry name" value="Prot_inh_pot1"/>
</dbReference>
<dbReference type="InterPro" id="IPR036354">
    <property type="entry name" value="Prot_inh_pot1_sf"/>
</dbReference>
<dbReference type="PANTHER" id="PTHR33091">
    <property type="entry name" value="PROTEIN, PUTATIVE, EXPRESSED-RELATED"/>
    <property type="match status" value="1"/>
</dbReference>
<dbReference type="PANTHER" id="PTHR33091:SF83">
    <property type="entry name" value="SERINE PROTEASE INHIBITOR, POTATO INHIBITOR I-TYPE FAMILY PROTEIN-RELATED"/>
    <property type="match status" value="1"/>
</dbReference>
<dbReference type="Pfam" id="PF00280">
    <property type="entry name" value="potato_inhibit"/>
    <property type="match status" value="1"/>
</dbReference>
<dbReference type="PRINTS" id="PR00292">
    <property type="entry name" value="POTATOINHBTR"/>
</dbReference>
<dbReference type="SUPFAM" id="SSF54654">
    <property type="entry name" value="CI-2 family of serine protease inhibitors"/>
    <property type="match status" value="1"/>
</dbReference>
<dbReference type="PROSITE" id="PS00285">
    <property type="entry name" value="POTATO_INHIBITOR"/>
    <property type="match status" value="1"/>
</dbReference>